<organism>
    <name type="scientific">Corynebacterium glutamicum (strain R)</name>
    <dbReference type="NCBI Taxonomy" id="340322"/>
    <lineage>
        <taxon>Bacteria</taxon>
        <taxon>Bacillati</taxon>
        <taxon>Actinomycetota</taxon>
        <taxon>Actinomycetes</taxon>
        <taxon>Mycobacteriales</taxon>
        <taxon>Corynebacteriaceae</taxon>
        <taxon>Corynebacterium</taxon>
    </lineage>
</organism>
<feature type="chain" id="PRO_1000084577" description="tRNA pseudouridine synthase B">
    <location>
        <begin position="1"/>
        <end position="297"/>
    </location>
</feature>
<feature type="active site" description="Nucleophile" evidence="1">
    <location>
        <position position="44"/>
    </location>
</feature>
<gene>
    <name evidence="1" type="primary">truB</name>
    <name type="ordered locus">cgR_1808</name>
</gene>
<proteinExistence type="inferred from homology"/>
<reference key="1">
    <citation type="journal article" date="2007" name="Microbiology">
        <title>Comparative analysis of the Corynebacterium glutamicum group and complete genome sequence of strain R.</title>
        <authorList>
            <person name="Yukawa H."/>
            <person name="Omumasaba C.A."/>
            <person name="Nonaka H."/>
            <person name="Kos P."/>
            <person name="Okai N."/>
            <person name="Suzuki N."/>
            <person name="Suda M."/>
            <person name="Tsuge Y."/>
            <person name="Watanabe J."/>
            <person name="Ikeda Y."/>
            <person name="Vertes A.A."/>
            <person name="Inui M."/>
        </authorList>
    </citation>
    <scope>NUCLEOTIDE SEQUENCE [LARGE SCALE GENOMIC DNA]</scope>
    <source>
        <strain>R</strain>
    </source>
</reference>
<accession>A4QEY6</accession>
<protein>
    <recommendedName>
        <fullName evidence="1">tRNA pseudouridine synthase B</fullName>
        <ecNumber evidence="1">5.4.99.25</ecNumber>
    </recommendedName>
    <alternativeName>
        <fullName evidence="1">tRNA pseudouridine(55) synthase</fullName>
        <shortName evidence="1">Psi55 synthase</shortName>
    </alternativeName>
    <alternativeName>
        <fullName evidence="1">tRNA pseudouridylate synthase</fullName>
    </alternativeName>
    <alternativeName>
        <fullName evidence="1">tRNA-uridine isomerase</fullName>
    </alternativeName>
</protein>
<dbReference type="EC" id="5.4.99.25" evidence="1"/>
<dbReference type="EMBL" id="AP009044">
    <property type="protein sequence ID" value="BAF54802.1"/>
    <property type="molecule type" value="Genomic_DNA"/>
</dbReference>
<dbReference type="RefSeq" id="WP_011897395.1">
    <property type="nucleotide sequence ID" value="NC_009342.1"/>
</dbReference>
<dbReference type="SMR" id="A4QEY6"/>
<dbReference type="KEGG" id="cgt:cgR_1808"/>
<dbReference type="HOGENOM" id="CLU_032087_0_0_11"/>
<dbReference type="PhylomeDB" id="A4QEY6"/>
<dbReference type="Proteomes" id="UP000006698">
    <property type="component" value="Chromosome"/>
</dbReference>
<dbReference type="GO" id="GO:0003723">
    <property type="term" value="F:RNA binding"/>
    <property type="evidence" value="ECO:0007669"/>
    <property type="project" value="InterPro"/>
</dbReference>
<dbReference type="GO" id="GO:0160148">
    <property type="term" value="F:tRNA pseudouridine(55) synthase activity"/>
    <property type="evidence" value="ECO:0007669"/>
    <property type="project" value="UniProtKB-EC"/>
</dbReference>
<dbReference type="GO" id="GO:1990481">
    <property type="term" value="P:mRNA pseudouridine synthesis"/>
    <property type="evidence" value="ECO:0007669"/>
    <property type="project" value="TreeGrafter"/>
</dbReference>
<dbReference type="GO" id="GO:0031119">
    <property type="term" value="P:tRNA pseudouridine synthesis"/>
    <property type="evidence" value="ECO:0007669"/>
    <property type="project" value="UniProtKB-UniRule"/>
</dbReference>
<dbReference type="CDD" id="cd02573">
    <property type="entry name" value="PseudoU_synth_EcTruB"/>
    <property type="match status" value="1"/>
</dbReference>
<dbReference type="FunFam" id="3.30.2350.10:FF:000011">
    <property type="entry name" value="tRNA pseudouridine synthase B"/>
    <property type="match status" value="1"/>
</dbReference>
<dbReference type="Gene3D" id="3.30.2350.10">
    <property type="entry name" value="Pseudouridine synthase"/>
    <property type="match status" value="1"/>
</dbReference>
<dbReference type="Gene3D" id="2.30.130.10">
    <property type="entry name" value="PUA domain"/>
    <property type="match status" value="1"/>
</dbReference>
<dbReference type="HAMAP" id="MF_01080">
    <property type="entry name" value="TruB_bact"/>
    <property type="match status" value="1"/>
</dbReference>
<dbReference type="InterPro" id="IPR020103">
    <property type="entry name" value="PsdUridine_synth_cat_dom_sf"/>
</dbReference>
<dbReference type="InterPro" id="IPR002501">
    <property type="entry name" value="PsdUridine_synth_N"/>
</dbReference>
<dbReference type="InterPro" id="IPR015947">
    <property type="entry name" value="PUA-like_sf"/>
</dbReference>
<dbReference type="InterPro" id="IPR036974">
    <property type="entry name" value="PUA_sf"/>
</dbReference>
<dbReference type="InterPro" id="IPR015225">
    <property type="entry name" value="tRNA_psdUridine_synth_fam2_C"/>
</dbReference>
<dbReference type="InterPro" id="IPR014780">
    <property type="entry name" value="tRNA_psdUridine_synth_TruB"/>
</dbReference>
<dbReference type="InterPro" id="IPR032819">
    <property type="entry name" value="TruB_C"/>
</dbReference>
<dbReference type="NCBIfam" id="TIGR00431">
    <property type="entry name" value="TruB"/>
    <property type="match status" value="1"/>
</dbReference>
<dbReference type="PANTHER" id="PTHR13767:SF2">
    <property type="entry name" value="PSEUDOURIDYLATE SYNTHASE TRUB1"/>
    <property type="match status" value="1"/>
</dbReference>
<dbReference type="PANTHER" id="PTHR13767">
    <property type="entry name" value="TRNA-PSEUDOURIDINE SYNTHASE"/>
    <property type="match status" value="1"/>
</dbReference>
<dbReference type="Pfam" id="PF09142">
    <property type="entry name" value="TruB_C"/>
    <property type="match status" value="1"/>
</dbReference>
<dbReference type="Pfam" id="PF16198">
    <property type="entry name" value="TruB_C_2"/>
    <property type="match status" value="1"/>
</dbReference>
<dbReference type="Pfam" id="PF01509">
    <property type="entry name" value="TruB_N"/>
    <property type="match status" value="1"/>
</dbReference>
<dbReference type="SUPFAM" id="SSF55120">
    <property type="entry name" value="Pseudouridine synthase"/>
    <property type="match status" value="1"/>
</dbReference>
<dbReference type="SUPFAM" id="SSF88697">
    <property type="entry name" value="PUA domain-like"/>
    <property type="match status" value="1"/>
</dbReference>
<sequence>MNAPAPKPGLVIVDKPAGMTSHDVVSKLRRAFSTRKVGHAGTLDPMATGVLVVGIERGTRFLAHMVASTKAYDATIRLGAATSTDDAEGEVISTTDASGLDHRAILAEIANLTGDIMQKPTKVSAIKIDGKRAHERVRDGEEVDIPARPVTVSVFDVLDYRVDSEFYDLDVRVHCSSGTYIRALARDLGNALQVGGHLTALRRTEVGPFTLNDATPLSKLQENPELSLNLDQALTRSYPVLDITEDEGVDLSMGKWLEPRGLKGVHAAVTPSGKAVALIEEKGKRLATVFVAHPNTL</sequence>
<keyword id="KW-0413">Isomerase</keyword>
<keyword id="KW-0819">tRNA processing</keyword>
<evidence type="ECO:0000255" key="1">
    <source>
        <dbReference type="HAMAP-Rule" id="MF_01080"/>
    </source>
</evidence>
<comment type="function">
    <text evidence="1">Responsible for synthesis of pseudouridine from uracil-55 in the psi GC loop of transfer RNAs.</text>
</comment>
<comment type="catalytic activity">
    <reaction evidence="1">
        <text>uridine(55) in tRNA = pseudouridine(55) in tRNA</text>
        <dbReference type="Rhea" id="RHEA:42532"/>
        <dbReference type="Rhea" id="RHEA-COMP:10101"/>
        <dbReference type="Rhea" id="RHEA-COMP:10102"/>
        <dbReference type="ChEBI" id="CHEBI:65314"/>
        <dbReference type="ChEBI" id="CHEBI:65315"/>
        <dbReference type="EC" id="5.4.99.25"/>
    </reaction>
</comment>
<comment type="similarity">
    <text evidence="1">Belongs to the pseudouridine synthase TruB family. Type 1 subfamily.</text>
</comment>
<name>TRUB_CORGB</name>